<protein>
    <recommendedName>
        <fullName>Ribonuclease 3</fullName>
        <ecNumber>3.1.26.3</ecNumber>
    </recommendedName>
    <alternativeName>
        <fullName>Ribonuclease III</fullName>
        <shortName>RNase III</shortName>
    </alternativeName>
</protein>
<reference key="1">
    <citation type="journal article" date="1996" name="Biochimie">
        <title>Structure and regulation of the Salmonella typhimurium rnc-era-recO operon.</title>
        <authorList>
            <person name="Anderson P.E."/>
            <person name="Matsunaga J."/>
            <person name="Simons E.L."/>
            <person name="Simons R.W."/>
        </authorList>
    </citation>
    <scope>NUCLEOTIDE SEQUENCE [GENOMIC DNA]</scope>
    <source>
        <strain>TSM117</strain>
    </source>
</reference>
<reference key="2">
    <citation type="journal article" date="2001" name="Nature">
        <title>Complete genome sequence of Salmonella enterica serovar Typhimurium LT2.</title>
        <authorList>
            <person name="McClelland M."/>
            <person name="Sanderson K.E."/>
            <person name="Spieth J."/>
            <person name="Clifton S.W."/>
            <person name="Latreille P."/>
            <person name="Courtney L."/>
            <person name="Porwollik S."/>
            <person name="Ali J."/>
            <person name="Dante M."/>
            <person name="Du F."/>
            <person name="Hou S."/>
            <person name="Layman D."/>
            <person name="Leonard S."/>
            <person name="Nguyen C."/>
            <person name="Scott K."/>
            <person name="Holmes A."/>
            <person name="Grewal N."/>
            <person name="Mulvaney E."/>
            <person name="Ryan E."/>
            <person name="Sun H."/>
            <person name="Florea L."/>
            <person name="Miller W."/>
            <person name="Stoneking T."/>
            <person name="Nhan M."/>
            <person name="Waterston R."/>
            <person name="Wilson R.K."/>
        </authorList>
    </citation>
    <scope>NUCLEOTIDE SEQUENCE [LARGE SCALE GENOMIC DNA]</scope>
    <source>
        <strain>LT2 / SGSC1412 / ATCC 700720</strain>
    </source>
</reference>
<reference key="3">
    <citation type="journal article" date="1998" name="FEMS Microbiol. Lett.">
        <title>RNase III deficient Salmonella typhimurium LT2 contains intervening sequences (IVSs) in its 23S rRNA.</title>
        <authorList>
            <person name="Mattatall N.R."/>
            <person name="Sanderson K.E."/>
        </authorList>
    </citation>
    <scope>DISRUPTION PHENOTYPE</scope>
    <source>
        <strain>LT2 / SGSC1412 / ATCC 700720</strain>
    </source>
</reference>
<keyword id="KW-0963">Cytoplasm</keyword>
<keyword id="KW-0255">Endonuclease</keyword>
<keyword id="KW-0378">Hydrolase</keyword>
<keyword id="KW-0460">Magnesium</keyword>
<keyword id="KW-0479">Metal-binding</keyword>
<keyword id="KW-0507">mRNA processing</keyword>
<keyword id="KW-0540">Nuclease</keyword>
<keyword id="KW-1185">Reference proteome</keyword>
<keyword id="KW-0694">RNA-binding</keyword>
<keyword id="KW-0698">rRNA processing</keyword>
<keyword id="KW-0699">rRNA-binding</keyword>
<keyword id="KW-0819">tRNA processing</keyword>
<sequence length="226" mass="25505">MNPIVINRLQRKLGYTFNHQELLQQALTHRSASSKHNERLEFLGDSILSFVIANALYHRFPRVDEGDMSRMRATLVRGNTLAELAREFDLGECLRLGPGELKSGGFRRESILADTVEALIGGVFLDSNIQTVEQLILNWYKTRLDEISPGDKQKDPKTRLQEYLQGRHLPLPSYLVVQVRGEAHDQEFTIHCQVSGLSEPVVGTGSSRRKAEQAAAEQALKKLELE</sequence>
<proteinExistence type="inferred from homology"/>
<comment type="function">
    <text>Digests double-stranded RNA. Involved in the processing of ribosomal RNA transcript to yield the immediate precursors to the large and small rRNAs (23S and 16S). Removes small helical intervening sequences (IVSs) from all 7 of the 23S rRNA transcripts. Probably also processes some mRNAs, and tRNAs when they are encoded in the rRNA operon. Probably processes pre-crRNA and tracrRNA of type II CRISPR loci if present in the organism.</text>
</comment>
<comment type="catalytic activity">
    <reaction>
        <text>Endonucleolytic cleavage to 5'-phosphomonoester.</text>
        <dbReference type="EC" id="3.1.26.3"/>
    </reaction>
</comment>
<comment type="cofactor">
    <cofactor evidence="1">
        <name>Mg(2+)</name>
        <dbReference type="ChEBI" id="CHEBI:18420"/>
    </cofactor>
</comment>
<comment type="subunit">
    <text evidence="1">Homodimer.</text>
</comment>
<comment type="subcellular location">
    <subcellularLocation>
        <location evidence="1">Cytoplasm</location>
    </subcellularLocation>
</comment>
<comment type="disruption phenotype">
    <text evidence="3">Accumulation of full-length 23S rRNA as well as larger precursor rRNA transcripts. Strain grows slower than wild-type.</text>
</comment>
<comment type="miscellaneous">
    <text>This organism contains small helical (90-110 nucleotide) intervening sequences (IVSs) in all 7 23S rRNA genes at either the 550-bp or 1170-bp positions or both, accumulating the 23S rRNA as 2.4, 1.7, 1.6, 0.7, and 0.5 kb pieces.</text>
</comment>
<comment type="similarity">
    <text evidence="4">Belongs to the ribonuclease III family.</text>
</comment>
<gene>
    <name type="primary">rnc</name>
    <name type="ordered locus">STM2581</name>
</gene>
<organism>
    <name type="scientific">Salmonella typhimurium (strain LT2 / SGSC1412 / ATCC 700720)</name>
    <dbReference type="NCBI Taxonomy" id="99287"/>
    <lineage>
        <taxon>Bacteria</taxon>
        <taxon>Pseudomonadati</taxon>
        <taxon>Pseudomonadota</taxon>
        <taxon>Gammaproteobacteria</taxon>
        <taxon>Enterobacterales</taxon>
        <taxon>Enterobacteriaceae</taxon>
        <taxon>Salmonella</taxon>
    </lineage>
</organism>
<dbReference type="EC" id="3.1.26.3"/>
<dbReference type="EMBL" id="U48415">
    <property type="protein sequence ID" value="AAA92440.1"/>
    <property type="molecule type" value="Genomic_DNA"/>
</dbReference>
<dbReference type="EMBL" id="AE006468">
    <property type="protein sequence ID" value="AAL21475.1"/>
    <property type="molecule type" value="Genomic_DNA"/>
</dbReference>
<dbReference type="RefSeq" id="NP_461516.1">
    <property type="nucleotide sequence ID" value="NC_003197.2"/>
</dbReference>
<dbReference type="RefSeq" id="WP_001068341.1">
    <property type="nucleotide sequence ID" value="NC_003197.2"/>
</dbReference>
<dbReference type="SMR" id="Q56056"/>
<dbReference type="STRING" id="99287.STM2581"/>
<dbReference type="PaxDb" id="99287-STM2581"/>
<dbReference type="GeneID" id="1254103"/>
<dbReference type="GeneID" id="66757008"/>
<dbReference type="KEGG" id="stm:STM2581"/>
<dbReference type="PATRIC" id="fig|99287.12.peg.2722"/>
<dbReference type="HOGENOM" id="CLU_000907_1_1_6"/>
<dbReference type="OMA" id="LTHKSCK"/>
<dbReference type="PhylomeDB" id="Q56056"/>
<dbReference type="BioCyc" id="SENT99287:STM2581-MONOMER"/>
<dbReference type="PHI-base" id="PHI:3724"/>
<dbReference type="Proteomes" id="UP000001014">
    <property type="component" value="Chromosome"/>
</dbReference>
<dbReference type="GO" id="GO:0005829">
    <property type="term" value="C:cytosol"/>
    <property type="evidence" value="ECO:0000318"/>
    <property type="project" value="GO_Central"/>
</dbReference>
<dbReference type="GO" id="GO:0003725">
    <property type="term" value="F:double-stranded RNA binding"/>
    <property type="evidence" value="ECO:0000318"/>
    <property type="project" value="GO_Central"/>
</dbReference>
<dbReference type="GO" id="GO:0046872">
    <property type="term" value="F:metal ion binding"/>
    <property type="evidence" value="ECO:0007669"/>
    <property type="project" value="UniProtKB-KW"/>
</dbReference>
<dbReference type="GO" id="GO:0004525">
    <property type="term" value="F:ribonuclease III activity"/>
    <property type="evidence" value="ECO:0000318"/>
    <property type="project" value="GO_Central"/>
</dbReference>
<dbReference type="GO" id="GO:0019843">
    <property type="term" value="F:rRNA binding"/>
    <property type="evidence" value="ECO:0007669"/>
    <property type="project" value="UniProtKB-KW"/>
</dbReference>
<dbReference type="GO" id="GO:0006397">
    <property type="term" value="P:mRNA processing"/>
    <property type="evidence" value="ECO:0007669"/>
    <property type="project" value="UniProtKB-UniRule"/>
</dbReference>
<dbReference type="GO" id="GO:0010468">
    <property type="term" value="P:regulation of gene expression"/>
    <property type="evidence" value="ECO:0000318"/>
    <property type="project" value="GO_Central"/>
</dbReference>
<dbReference type="GO" id="GO:0006396">
    <property type="term" value="P:RNA processing"/>
    <property type="evidence" value="ECO:0000318"/>
    <property type="project" value="GO_Central"/>
</dbReference>
<dbReference type="GO" id="GO:0006364">
    <property type="term" value="P:rRNA processing"/>
    <property type="evidence" value="ECO:0007669"/>
    <property type="project" value="UniProtKB-UniRule"/>
</dbReference>
<dbReference type="GO" id="GO:0008033">
    <property type="term" value="P:tRNA processing"/>
    <property type="evidence" value="ECO:0007669"/>
    <property type="project" value="UniProtKB-KW"/>
</dbReference>
<dbReference type="CDD" id="cd10845">
    <property type="entry name" value="DSRM_RNAse_III_family"/>
    <property type="match status" value="1"/>
</dbReference>
<dbReference type="CDD" id="cd00593">
    <property type="entry name" value="RIBOc"/>
    <property type="match status" value="1"/>
</dbReference>
<dbReference type="FunFam" id="1.10.1520.10:FF:000001">
    <property type="entry name" value="Ribonuclease 3"/>
    <property type="match status" value="1"/>
</dbReference>
<dbReference type="FunFam" id="3.30.160.20:FF:000003">
    <property type="entry name" value="Ribonuclease 3"/>
    <property type="match status" value="1"/>
</dbReference>
<dbReference type="Gene3D" id="3.30.160.20">
    <property type="match status" value="1"/>
</dbReference>
<dbReference type="Gene3D" id="1.10.1520.10">
    <property type="entry name" value="Ribonuclease III domain"/>
    <property type="match status" value="1"/>
</dbReference>
<dbReference type="HAMAP" id="MF_00104">
    <property type="entry name" value="RNase_III"/>
    <property type="match status" value="1"/>
</dbReference>
<dbReference type="InterPro" id="IPR014720">
    <property type="entry name" value="dsRBD_dom"/>
</dbReference>
<dbReference type="InterPro" id="IPR011907">
    <property type="entry name" value="RNase_III"/>
</dbReference>
<dbReference type="InterPro" id="IPR000999">
    <property type="entry name" value="RNase_III_dom"/>
</dbReference>
<dbReference type="InterPro" id="IPR036389">
    <property type="entry name" value="RNase_III_sf"/>
</dbReference>
<dbReference type="NCBIfam" id="TIGR02191">
    <property type="entry name" value="RNaseIII"/>
    <property type="match status" value="1"/>
</dbReference>
<dbReference type="PANTHER" id="PTHR11207:SF0">
    <property type="entry name" value="RIBONUCLEASE 3"/>
    <property type="match status" value="1"/>
</dbReference>
<dbReference type="PANTHER" id="PTHR11207">
    <property type="entry name" value="RIBONUCLEASE III"/>
    <property type="match status" value="1"/>
</dbReference>
<dbReference type="Pfam" id="PF00035">
    <property type="entry name" value="dsrm"/>
    <property type="match status" value="1"/>
</dbReference>
<dbReference type="Pfam" id="PF14622">
    <property type="entry name" value="Ribonucleas_3_3"/>
    <property type="match status" value="1"/>
</dbReference>
<dbReference type="SMART" id="SM00358">
    <property type="entry name" value="DSRM"/>
    <property type="match status" value="1"/>
</dbReference>
<dbReference type="SMART" id="SM00535">
    <property type="entry name" value="RIBOc"/>
    <property type="match status" value="1"/>
</dbReference>
<dbReference type="SUPFAM" id="SSF54768">
    <property type="entry name" value="dsRNA-binding domain-like"/>
    <property type="match status" value="1"/>
</dbReference>
<dbReference type="SUPFAM" id="SSF69065">
    <property type="entry name" value="RNase III domain-like"/>
    <property type="match status" value="1"/>
</dbReference>
<dbReference type="PROSITE" id="PS50137">
    <property type="entry name" value="DS_RBD"/>
    <property type="match status" value="1"/>
</dbReference>
<dbReference type="PROSITE" id="PS00517">
    <property type="entry name" value="RNASE_3_1"/>
    <property type="match status" value="1"/>
</dbReference>
<dbReference type="PROSITE" id="PS50142">
    <property type="entry name" value="RNASE_3_2"/>
    <property type="match status" value="1"/>
</dbReference>
<evidence type="ECO:0000250" key="1"/>
<evidence type="ECO:0000255" key="2"/>
<evidence type="ECO:0000269" key="3">
    <source>
    </source>
</evidence>
<evidence type="ECO:0000305" key="4"/>
<name>RNC_SALTY</name>
<accession>Q56056</accession>
<feature type="chain" id="PRO_0000180429" description="Ribonuclease 3">
    <location>
        <begin position="1"/>
        <end position="226"/>
    </location>
</feature>
<feature type="domain" description="RNase III">
    <location>
        <begin position="6"/>
        <end position="128"/>
    </location>
</feature>
<feature type="domain" description="DRBM">
    <location>
        <begin position="155"/>
        <end position="225"/>
    </location>
</feature>
<feature type="active site" evidence="2">
    <location>
        <position position="45"/>
    </location>
</feature>
<feature type="active site" evidence="1">
    <location>
        <position position="117"/>
    </location>
</feature>
<feature type="binding site" evidence="1">
    <location>
        <position position="41"/>
    </location>
    <ligand>
        <name>Mg(2+)</name>
        <dbReference type="ChEBI" id="CHEBI:18420"/>
    </ligand>
</feature>
<feature type="binding site" evidence="1">
    <location>
        <position position="114"/>
    </location>
    <ligand>
        <name>Mg(2+)</name>
        <dbReference type="ChEBI" id="CHEBI:18420"/>
    </ligand>
</feature>
<feature type="binding site" evidence="1">
    <location>
        <position position="117"/>
    </location>
    <ligand>
        <name>Mg(2+)</name>
        <dbReference type="ChEBI" id="CHEBI:18420"/>
    </ligand>
</feature>
<feature type="sequence conflict" description="In Ref. 1; AAA92440." evidence="4" ref="1">
    <original>YH</original>
    <variation>S</variation>
    <location>
        <begin position="57"/>
        <end position="58"/>
    </location>
</feature>
<feature type="sequence conflict" description="In Ref. 1; AAA92440." evidence="4" ref="1">
    <original>AT</original>
    <variation>DP</variation>
    <location>
        <begin position="73"/>
        <end position="74"/>
    </location>
</feature>
<feature type="sequence conflict" description="In Ref. 1; AAA92440." evidence="4" ref="1">
    <original>EQAL</original>
    <variation>NSV</variation>
    <location>
        <begin position="217"/>
        <end position="220"/>
    </location>
</feature>